<reference key="1">
    <citation type="submission" date="2007-06" db="EMBL/GenBank/DDBJ databases">
        <title>Complete sequence of Methanococcus maripaludis C7.</title>
        <authorList>
            <consortium name="US DOE Joint Genome Institute"/>
            <person name="Copeland A."/>
            <person name="Lucas S."/>
            <person name="Lapidus A."/>
            <person name="Barry K."/>
            <person name="Glavina del Rio T."/>
            <person name="Dalin E."/>
            <person name="Tice H."/>
            <person name="Pitluck S."/>
            <person name="Clum A."/>
            <person name="Schmutz J."/>
            <person name="Larimer F."/>
            <person name="Land M."/>
            <person name="Hauser L."/>
            <person name="Kyrpides N."/>
            <person name="Anderson I."/>
            <person name="Sieprawska-Lupa M."/>
            <person name="Whitman W.B."/>
            <person name="Richardson P."/>
        </authorList>
    </citation>
    <scope>NUCLEOTIDE SEQUENCE [LARGE SCALE GENOMIC DNA]</scope>
    <source>
        <strain>C7 / ATCC BAA-1331</strain>
    </source>
</reference>
<dbReference type="EMBL" id="CP000745">
    <property type="protein sequence ID" value="ABR65893.1"/>
    <property type="molecule type" value="Genomic_DNA"/>
</dbReference>
<dbReference type="SMR" id="A6VHG7"/>
<dbReference type="STRING" id="426368.MmarC7_0826"/>
<dbReference type="KEGG" id="mmz:MmarC7_0826"/>
<dbReference type="eggNOG" id="arCOG04185">
    <property type="taxonomic scope" value="Archaea"/>
</dbReference>
<dbReference type="HOGENOM" id="CLU_090139_2_0_2"/>
<dbReference type="OrthoDB" id="6533at2157"/>
<dbReference type="GO" id="GO:0022627">
    <property type="term" value="C:cytosolic small ribosomal subunit"/>
    <property type="evidence" value="ECO:0007669"/>
    <property type="project" value="TreeGrafter"/>
</dbReference>
<dbReference type="GO" id="GO:0070181">
    <property type="term" value="F:small ribosomal subunit rRNA binding"/>
    <property type="evidence" value="ECO:0007669"/>
    <property type="project" value="TreeGrafter"/>
</dbReference>
<dbReference type="GO" id="GO:0003735">
    <property type="term" value="F:structural constituent of ribosome"/>
    <property type="evidence" value="ECO:0007669"/>
    <property type="project" value="InterPro"/>
</dbReference>
<dbReference type="GO" id="GO:0006412">
    <property type="term" value="P:translation"/>
    <property type="evidence" value="ECO:0007669"/>
    <property type="project" value="UniProtKB-UniRule"/>
</dbReference>
<dbReference type="CDD" id="cd00353">
    <property type="entry name" value="Ribosomal_S15p_S13e"/>
    <property type="match status" value="1"/>
</dbReference>
<dbReference type="FunFam" id="1.10.287.10:FF:000003">
    <property type="entry name" value="40S ribosomal protein S13"/>
    <property type="match status" value="1"/>
</dbReference>
<dbReference type="Gene3D" id="4.10.860.130">
    <property type="match status" value="1"/>
</dbReference>
<dbReference type="Gene3D" id="1.10.287.10">
    <property type="entry name" value="S15/NS1, RNA-binding"/>
    <property type="match status" value="1"/>
</dbReference>
<dbReference type="HAMAP" id="MF_01343_A">
    <property type="entry name" value="Ribosomal_uS15_A"/>
    <property type="match status" value="1"/>
</dbReference>
<dbReference type="InterPro" id="IPR000589">
    <property type="entry name" value="Ribosomal_uS15"/>
</dbReference>
<dbReference type="InterPro" id="IPR023029">
    <property type="entry name" value="Ribosomal_uS15_arc_euk"/>
</dbReference>
<dbReference type="InterPro" id="IPR012606">
    <property type="entry name" value="Ribosomal_uS15_N"/>
</dbReference>
<dbReference type="InterPro" id="IPR009068">
    <property type="entry name" value="uS15_NS1_RNA-bd_sf"/>
</dbReference>
<dbReference type="NCBIfam" id="NF006331">
    <property type="entry name" value="PRK08561.1"/>
    <property type="match status" value="1"/>
</dbReference>
<dbReference type="PANTHER" id="PTHR11885">
    <property type="entry name" value="RIBOSOMAL PROTEIN S15P/S13E"/>
    <property type="match status" value="1"/>
</dbReference>
<dbReference type="PANTHER" id="PTHR11885:SF6">
    <property type="entry name" value="SMALL RIBOSOMAL SUBUNIT PROTEIN US15"/>
    <property type="match status" value="1"/>
</dbReference>
<dbReference type="Pfam" id="PF08069">
    <property type="entry name" value="Ribosomal_S13_N"/>
    <property type="match status" value="1"/>
</dbReference>
<dbReference type="Pfam" id="PF00312">
    <property type="entry name" value="Ribosomal_S15"/>
    <property type="match status" value="1"/>
</dbReference>
<dbReference type="SMART" id="SM01386">
    <property type="entry name" value="Ribosomal_S13_N"/>
    <property type="match status" value="1"/>
</dbReference>
<dbReference type="SMART" id="SM01387">
    <property type="entry name" value="Ribosomal_S15"/>
    <property type="match status" value="1"/>
</dbReference>
<dbReference type="SUPFAM" id="SSF47060">
    <property type="entry name" value="S15/NS1 RNA-binding domain"/>
    <property type="match status" value="1"/>
</dbReference>
<dbReference type="PROSITE" id="PS00362">
    <property type="entry name" value="RIBOSOMAL_S15"/>
    <property type="match status" value="1"/>
</dbReference>
<organism>
    <name type="scientific">Methanococcus maripaludis (strain C7 / ATCC BAA-1331)</name>
    <dbReference type="NCBI Taxonomy" id="426368"/>
    <lineage>
        <taxon>Archaea</taxon>
        <taxon>Methanobacteriati</taxon>
        <taxon>Methanobacteriota</taxon>
        <taxon>Methanomada group</taxon>
        <taxon>Methanococci</taxon>
        <taxon>Methanococcales</taxon>
        <taxon>Methanococcaceae</taxon>
        <taxon>Methanococcus</taxon>
    </lineage>
</organism>
<comment type="subunit">
    <text evidence="1">Part of the 30S ribosomal subunit.</text>
</comment>
<comment type="similarity">
    <text evidence="1">Belongs to the universal ribosomal protein uS15 family.</text>
</comment>
<gene>
    <name evidence="1" type="primary">rps15</name>
    <name type="ordered locus">MmarC7_0826</name>
</gene>
<feature type="chain" id="PRO_1000054814" description="Small ribosomal subunit protein uS15">
    <location>
        <begin position="1"/>
        <end position="151"/>
    </location>
</feature>
<feature type="region of interest" description="Disordered" evidence="2">
    <location>
        <begin position="1"/>
        <end position="20"/>
    </location>
</feature>
<evidence type="ECO:0000255" key="1">
    <source>
        <dbReference type="HAMAP-Rule" id="MF_01343"/>
    </source>
</evidence>
<evidence type="ECO:0000256" key="2">
    <source>
        <dbReference type="SAM" id="MobiDB-lite"/>
    </source>
</evidence>
<evidence type="ECO:0000305" key="3"/>
<name>RS15_METM7</name>
<keyword id="KW-0687">Ribonucleoprotein</keyword>
<keyword id="KW-0689">Ribosomal protein</keyword>
<accession>A6VHG7</accession>
<sequence length="151" mass="17002">MARLHSGKRGSSGSTRPLRTEVPEWVSMSAEDIEAKIVEMAKDGKQSAIIGNILRDMYGVPSVKLVTGKSVSSIMKEAGFYTEVPEDLFNLMKKAINLRNHLENNPRDTHSTVGLKLIESKIRRLVKYYRGTKVLPAKWRYSPDTARLLVE</sequence>
<protein>
    <recommendedName>
        <fullName evidence="1">Small ribosomal subunit protein uS15</fullName>
    </recommendedName>
    <alternativeName>
        <fullName evidence="3">30S ribosomal protein S15</fullName>
    </alternativeName>
</protein>
<proteinExistence type="inferred from homology"/>